<organism evidence="8">
    <name type="scientific">Bos taurus</name>
    <name type="common">Bovine</name>
    <dbReference type="NCBI Taxonomy" id="9913"/>
    <lineage>
        <taxon>Eukaryota</taxon>
        <taxon>Metazoa</taxon>
        <taxon>Chordata</taxon>
        <taxon>Craniata</taxon>
        <taxon>Vertebrata</taxon>
        <taxon>Euteleostomi</taxon>
        <taxon>Mammalia</taxon>
        <taxon>Eutheria</taxon>
        <taxon>Laurasiatheria</taxon>
        <taxon>Artiodactyla</taxon>
        <taxon>Ruminantia</taxon>
        <taxon>Pecora</taxon>
        <taxon>Bovidae</taxon>
        <taxon>Bovinae</taxon>
        <taxon>Bos</taxon>
    </lineage>
</organism>
<sequence>MKLIILDHYSQASEWAAKYIRNRIIQFNPGPDKYFTLGLPTGSTPLGCYKKLIEYYKNGDLSFKYVKTFNMDEYVGLPRDHPESYHSFMWNNFFKHIDIHPENTHILDGNAADLQAECDAFEEKIKAAGGIELFVGGIGPDGHIAFNEPGSSLVSRTRVKTLAMDTILANARFFDGDLAKVPTMALTVGVGTVMDAREVMILITGAHKAFALYKAIEEGVNHMWTVSAFQQHPRTVFVCDEDATLELKVKTVKYFKGLMLVHNKLVDPLYSIKEKEIEKSQSSKKPYSD</sequence>
<accession>A4FV08</accession>
<dbReference type="EC" id="3.5.99.6" evidence="5"/>
<dbReference type="EMBL" id="BC123566">
    <property type="protein sequence ID" value="AAI23567.1"/>
    <property type="molecule type" value="mRNA"/>
</dbReference>
<dbReference type="RefSeq" id="NP_001073756.2">
    <property type="nucleotide sequence ID" value="NM_001080287.3"/>
</dbReference>
<dbReference type="SMR" id="A4FV08"/>
<dbReference type="FunCoup" id="A4FV08">
    <property type="interactions" value="2016"/>
</dbReference>
<dbReference type="STRING" id="9913.ENSBTAP00000010347"/>
<dbReference type="PaxDb" id="9913-ENSBTAP00000010347"/>
<dbReference type="GeneID" id="522919"/>
<dbReference type="KEGG" id="bta:522919"/>
<dbReference type="CTD" id="10007"/>
<dbReference type="VEuPathDB" id="HostDB:ENSBTAG00000007865"/>
<dbReference type="eggNOG" id="KOG3148">
    <property type="taxonomic scope" value="Eukaryota"/>
</dbReference>
<dbReference type="HOGENOM" id="CLU_049611_0_1_1"/>
<dbReference type="InParanoid" id="A4FV08"/>
<dbReference type="OMA" id="HVITQGI"/>
<dbReference type="OrthoDB" id="7663298at2759"/>
<dbReference type="TreeFam" id="TF300841"/>
<dbReference type="Reactome" id="R-BTA-70171">
    <property type="pathway name" value="Glycolysis"/>
</dbReference>
<dbReference type="UniPathway" id="UPA00113">
    <property type="reaction ID" value="UER00528"/>
</dbReference>
<dbReference type="Proteomes" id="UP000009136">
    <property type="component" value="Chromosome 7"/>
</dbReference>
<dbReference type="Bgee" id="ENSBTAG00000007865">
    <property type="expression patterns" value="Expressed in corpus epididymis and 106 other cell types or tissues"/>
</dbReference>
<dbReference type="GO" id="GO:0005737">
    <property type="term" value="C:cytoplasm"/>
    <property type="evidence" value="ECO:0000318"/>
    <property type="project" value="GO_Central"/>
</dbReference>
<dbReference type="GO" id="GO:0004342">
    <property type="term" value="F:glucosamine-6-phosphate deaminase activity"/>
    <property type="evidence" value="ECO:0000314"/>
    <property type="project" value="UniProtKB"/>
</dbReference>
<dbReference type="GO" id="GO:0042802">
    <property type="term" value="F:identical protein binding"/>
    <property type="evidence" value="ECO:0000318"/>
    <property type="project" value="GO_Central"/>
</dbReference>
<dbReference type="GO" id="GO:0016853">
    <property type="term" value="F:isomerase activity"/>
    <property type="evidence" value="ECO:0007669"/>
    <property type="project" value="UniProtKB-KW"/>
</dbReference>
<dbReference type="GO" id="GO:0005975">
    <property type="term" value="P:carbohydrate metabolic process"/>
    <property type="evidence" value="ECO:0007669"/>
    <property type="project" value="InterPro"/>
</dbReference>
<dbReference type="GO" id="GO:0006043">
    <property type="term" value="P:glucosamine catabolic process"/>
    <property type="evidence" value="ECO:0000318"/>
    <property type="project" value="GO_Central"/>
</dbReference>
<dbReference type="GO" id="GO:0006046">
    <property type="term" value="P:N-acetylglucosamine catabolic process"/>
    <property type="evidence" value="ECO:0000318"/>
    <property type="project" value="GO_Central"/>
</dbReference>
<dbReference type="GO" id="GO:0019262">
    <property type="term" value="P:N-acetylneuraminate catabolic process"/>
    <property type="evidence" value="ECO:0000318"/>
    <property type="project" value="GO_Central"/>
</dbReference>
<dbReference type="GO" id="GO:0006048">
    <property type="term" value="P:UDP-N-acetylglucosamine biosynthetic process"/>
    <property type="evidence" value="ECO:0000250"/>
    <property type="project" value="UniProtKB"/>
</dbReference>
<dbReference type="CDD" id="cd01399">
    <property type="entry name" value="GlcN6P_deaminase"/>
    <property type="match status" value="1"/>
</dbReference>
<dbReference type="FunFam" id="3.40.50.1360:FF:000004">
    <property type="entry name" value="Glucosamine-6-phosphate isomerase"/>
    <property type="match status" value="1"/>
</dbReference>
<dbReference type="Gene3D" id="3.40.50.1360">
    <property type="match status" value="1"/>
</dbReference>
<dbReference type="HAMAP" id="MF_01241">
    <property type="entry name" value="GlcN6P_deamin"/>
    <property type="match status" value="1"/>
</dbReference>
<dbReference type="InterPro" id="IPR006148">
    <property type="entry name" value="Glc/Gal-6P_isomerase"/>
</dbReference>
<dbReference type="InterPro" id="IPR004547">
    <property type="entry name" value="Glucosamine6P_isomerase"/>
</dbReference>
<dbReference type="InterPro" id="IPR018321">
    <property type="entry name" value="Glucosamine6P_isomerase_CS"/>
</dbReference>
<dbReference type="InterPro" id="IPR037171">
    <property type="entry name" value="NagB/RpiA_transferase-like"/>
</dbReference>
<dbReference type="NCBIfam" id="TIGR00502">
    <property type="entry name" value="nagB"/>
    <property type="match status" value="1"/>
</dbReference>
<dbReference type="PANTHER" id="PTHR11280">
    <property type="entry name" value="GLUCOSAMINE-6-PHOSPHATE ISOMERASE"/>
    <property type="match status" value="1"/>
</dbReference>
<dbReference type="PANTHER" id="PTHR11280:SF8">
    <property type="entry name" value="GLUCOSAMINE-6-PHOSPHATE ISOMERASE 1"/>
    <property type="match status" value="1"/>
</dbReference>
<dbReference type="Pfam" id="PF01182">
    <property type="entry name" value="Glucosamine_iso"/>
    <property type="match status" value="1"/>
</dbReference>
<dbReference type="SUPFAM" id="SSF100950">
    <property type="entry name" value="NagB/RpiA/CoA transferase-like"/>
    <property type="match status" value="1"/>
</dbReference>
<dbReference type="PROSITE" id="PS01161">
    <property type="entry name" value="GLC_GALNAC_ISOMERASE"/>
    <property type="match status" value="1"/>
</dbReference>
<reference key="1">
    <citation type="submission" date="2006-09" db="EMBL/GenBank/DDBJ databases">
        <authorList>
            <consortium name="NIH - Mammalian Gene Collection (MGC) project"/>
        </authorList>
    </citation>
    <scope>NUCLEOTIDE SEQUENCE [LARGE SCALE MRNA]</scope>
    <source>
        <strain>Hereford</strain>
        <tissue>Fetal lung</tissue>
    </source>
</reference>
<reference key="2">
    <citation type="journal article" date="1998" name="Biochim. Biophys. Acta">
        <title>Glucosamine-6-phosphate deaminase from beef kidney is an allosteric system of the V-type.</title>
        <authorList>
            <person name="Lara-Lemus R."/>
            <person name="Calcagno M.L."/>
        </authorList>
    </citation>
    <scope>PROTEIN SEQUENCE OF 1-42</scope>
    <scope>FUNCTION</scope>
    <scope>CATALYTIC ACTIVITY</scope>
    <scope>ACTIVITY REGULATION</scope>
    <scope>BIOPHYSICOCHEMICAL PROPERTIES</scope>
    <scope>SUBUNIT</scope>
</reference>
<keyword id="KW-0007">Acetylation</keyword>
<keyword id="KW-0119">Carbohydrate metabolism</keyword>
<keyword id="KW-0963">Cytoplasm</keyword>
<keyword id="KW-0903">Direct protein sequencing</keyword>
<keyword id="KW-0378">Hydrolase</keyword>
<keyword id="KW-0413">Isomerase</keyword>
<keyword id="KW-0597">Phosphoprotein</keyword>
<keyword id="KW-1185">Reference proteome</keyword>
<proteinExistence type="evidence at protein level"/>
<name>GNPI1_BOVIN</name>
<evidence type="ECO:0000250" key="1"/>
<evidence type="ECO:0000250" key="2">
    <source>
        <dbReference type="UniProtKB" id="O88958"/>
    </source>
</evidence>
<evidence type="ECO:0000250" key="3">
    <source>
        <dbReference type="UniProtKB" id="P46926"/>
    </source>
</evidence>
<evidence type="ECO:0000250" key="4">
    <source>
        <dbReference type="UniProtKB" id="Q64422"/>
    </source>
</evidence>
<evidence type="ECO:0000269" key="5">
    <source>
    </source>
</evidence>
<evidence type="ECO:0000305" key="6"/>
<evidence type="ECO:0000305" key="7">
    <source>
    </source>
</evidence>
<evidence type="ECO:0000312" key="8">
    <source>
        <dbReference type="Proteomes" id="UP000009136"/>
    </source>
</evidence>
<gene>
    <name evidence="3" type="primary">GNPDA1</name>
    <name evidence="3" type="synonym">GNPI</name>
</gene>
<comment type="function">
    <text evidence="3 4 5">Catalyzes the reversible conversion of alpha-D-glucosamine 6-phosphate (GlcN-6P) into beta-D-fructose 6-phosphate (Fru-6P) and ammonium ion, a regulatory reaction step in de novo uridine diphosphate-N-acetyl-alpha-D-glucosamine (UDP-GlcNAc) biosynthesis via hexosamine pathway. Deamination is coupled to aldo-keto isomerization mediating the metabolic flux from UDP-GlcNAc toward Fru-6P. At high ammonium level can drive amination and isomerization of Fru-6P toward hexosamines and UDP-GlcNAc synthesis (PubMed:9774701). Has a role in fine tuning the metabolic fluctuations of cytosolic UDP-GlcNAc and their effects on hyaluronan synthesis that occur during tissue remodeling (By similarity). Seems to trigger calcium oscillations in mammalian eggs. These oscillations serve as the essential trigger for egg activation and early development of the embryo (By similarity).</text>
</comment>
<comment type="catalytic activity">
    <reaction evidence="5">
        <text>alpha-D-glucosamine 6-phosphate + H2O = beta-D-fructose 6-phosphate + NH4(+)</text>
        <dbReference type="Rhea" id="RHEA:12172"/>
        <dbReference type="ChEBI" id="CHEBI:15377"/>
        <dbReference type="ChEBI" id="CHEBI:28938"/>
        <dbReference type="ChEBI" id="CHEBI:57634"/>
        <dbReference type="ChEBI" id="CHEBI:75989"/>
        <dbReference type="EC" id="3.5.99.6"/>
    </reaction>
    <physiologicalReaction direction="left-to-right" evidence="7">
        <dbReference type="Rhea" id="RHEA:12173"/>
    </physiologicalReaction>
    <physiologicalReaction direction="right-to-left" evidence="7">
        <dbReference type="Rhea" id="RHEA:12174"/>
    </physiologicalReaction>
</comment>
<comment type="activity regulation">
    <text evidence="5">Allosterically activated by N-acetylglucosamine-6-phosphate (GlcNAc6P).</text>
</comment>
<comment type="biophysicochemical properties">
    <kinetics>
        <KM>0.65 mM for alpha-D-glucosamine 6-phosphate (in the absence of GlcNAc6P)</KM>
        <KM evidence="5">5.9 mM for beta-D-fructose 6-phosphate (in the presence of GlcNAc6P)</KM>
        <KM evidence="5">3.7 mM for NH4(+) (in the presence of GlcNAc6P)</KM>
        <text>kcat is 61.6 sec(-1) for conversion of alpha-D-glucosamine 6-phosphate into beta-D-fructose 6-phosphate (in the presence of GlcNAc6P). kcat is 0.37 sec(-1) for conversion of alpha-D-glucosamine 6-phosphate into beta-D-fructose 6-phosphate (in the absence of GlcNAc6P). kcat is 5.8 sec(-1) for conversion of beta-D-fructose 6-phosphate into alpha-D-glucosamine 6-phosphate (in the presence of GlcNAc6P).</text>
    </kinetics>
</comment>
<comment type="pathway">
    <text evidence="3">Nucleotide-sugar biosynthesis; UDP-N-acetyl-alpha-D-glucosamine biosynthesis; alpha-D-glucosamine 6-phosphate from D-fructose 6-phosphate: step 1/1.</text>
</comment>
<comment type="subunit">
    <text evidence="5">Homohexamer.</text>
</comment>
<comment type="subcellular location">
    <subcellularLocation>
        <location evidence="2">Cytoplasm</location>
    </subcellularLocation>
</comment>
<comment type="similarity">
    <text evidence="6">Belongs to the glucosamine/galactosamine-6-phosphate isomerase family.</text>
</comment>
<feature type="chain" id="PRO_0000343209" description="Glucosamine-6-phosphate deaminase 1">
    <location>
        <begin position="1"/>
        <end position="289"/>
    </location>
</feature>
<feature type="active site" description="Proton acceptor; for enolization step" evidence="1">
    <location>
        <position position="72"/>
    </location>
</feature>
<feature type="active site" description="For ring-opening step" evidence="1">
    <location>
        <position position="141"/>
    </location>
</feature>
<feature type="active site" description="Proton acceptor; for ring-opening step" evidence="1">
    <location>
        <position position="143"/>
    </location>
</feature>
<feature type="active site" description="For ring-opening step" evidence="1">
    <location>
        <position position="148"/>
    </location>
</feature>
<feature type="modified residue" description="N6-acetyllysine" evidence="3">
    <location>
        <position position="64"/>
    </location>
</feature>
<feature type="modified residue" description="Phosphothreonine" evidence="2">
    <location>
        <position position="161"/>
    </location>
</feature>
<protein>
    <recommendedName>
        <fullName evidence="3">Glucosamine-6-phosphate deaminase 1</fullName>
        <shortName>GlcN6P deaminase 1</shortName>
        <ecNumber evidence="5">3.5.99.6</ecNumber>
    </recommendedName>
    <alternativeName>
        <fullName evidence="3">Glucosamine-6-phosphate isomerase 1</fullName>
    </alternativeName>
    <alternativeName>
        <fullName evidence="3">Protein oscillin</fullName>
    </alternativeName>
</protein>